<organism>
    <name type="scientific">Mus musculus</name>
    <name type="common">Mouse</name>
    <dbReference type="NCBI Taxonomy" id="10090"/>
    <lineage>
        <taxon>Eukaryota</taxon>
        <taxon>Metazoa</taxon>
        <taxon>Chordata</taxon>
        <taxon>Craniata</taxon>
        <taxon>Vertebrata</taxon>
        <taxon>Euteleostomi</taxon>
        <taxon>Mammalia</taxon>
        <taxon>Eutheria</taxon>
        <taxon>Euarchontoglires</taxon>
        <taxon>Glires</taxon>
        <taxon>Rodentia</taxon>
        <taxon>Myomorpha</taxon>
        <taxon>Muroidea</taxon>
        <taxon>Muridae</taxon>
        <taxon>Murinae</taxon>
        <taxon>Mus</taxon>
        <taxon>Mus</taxon>
    </lineage>
</organism>
<accession>P15533</accession>
<accession>Q3UV85</accession>
<accession>Q3UZ29</accession>
<accession>Q99K55</accession>
<accession>Q99PQ7</accession>
<accession>Q99PQ8</accession>
<accession>Q99PQ9</accession>
<proteinExistence type="evidence at protein level"/>
<dbReference type="EMBL" id="J03776">
    <property type="protein sequence ID" value="AAA40073.1"/>
    <property type="status" value="ALT_FRAME"/>
    <property type="molecule type" value="mRNA"/>
</dbReference>
<dbReference type="EMBL" id="AF220014">
    <property type="protein sequence ID" value="AAG53468.1"/>
    <property type="molecule type" value="mRNA"/>
</dbReference>
<dbReference type="EMBL" id="AF220015">
    <property type="protein sequence ID" value="AAG53469.1"/>
    <property type="molecule type" value="mRNA"/>
</dbReference>
<dbReference type="EMBL" id="AF220016">
    <property type="protein sequence ID" value="AAG53470.1"/>
    <property type="status" value="ALT_INIT"/>
    <property type="molecule type" value="Genomic_DNA"/>
</dbReference>
<dbReference type="EMBL" id="AK134144">
    <property type="protein sequence ID" value="BAE22032.1"/>
    <property type="molecule type" value="mRNA"/>
</dbReference>
<dbReference type="EMBL" id="AK137506">
    <property type="protein sequence ID" value="BAE23387.1"/>
    <property type="molecule type" value="mRNA"/>
</dbReference>
<dbReference type="EMBL" id="AC122400">
    <property type="status" value="NOT_ANNOTATED_CDS"/>
    <property type="molecule type" value="Genomic_DNA"/>
</dbReference>
<dbReference type="EMBL" id="AC142110">
    <property type="status" value="NOT_ANNOTATED_CDS"/>
    <property type="molecule type" value="Genomic_DNA"/>
</dbReference>
<dbReference type="EMBL" id="CH466531">
    <property type="protein sequence ID" value="EDL16725.1"/>
    <property type="molecule type" value="Genomic_DNA"/>
</dbReference>
<dbReference type="EMBL" id="CH466531">
    <property type="protein sequence ID" value="EDL16726.1"/>
    <property type="molecule type" value="Genomic_DNA"/>
</dbReference>
<dbReference type="EMBL" id="BC005447">
    <property type="protein sequence ID" value="AAH05447.1"/>
    <property type="molecule type" value="mRNA"/>
</dbReference>
<dbReference type="CCDS" id="CCDS40068.1">
    <molecule id="P15533-1"/>
</dbReference>
<dbReference type="PIR" id="A30891">
    <property type="entry name" value="A30891"/>
</dbReference>
<dbReference type="RefSeq" id="NP_001344396.1">
    <molecule id="P15533-1"/>
    <property type="nucleotide sequence ID" value="NM_001357467.1"/>
</dbReference>
<dbReference type="RefSeq" id="NP_033125.2">
    <molecule id="P15533-1"/>
    <property type="nucleotide sequence ID" value="NM_009099.2"/>
</dbReference>
<dbReference type="RefSeq" id="XP_006507534.1">
    <property type="nucleotide sequence ID" value="XM_006507471.2"/>
</dbReference>
<dbReference type="PDB" id="2ECW">
    <property type="method" value="NMR"/>
    <property type="chains" value="A=1-78"/>
</dbReference>
<dbReference type="PDBsum" id="2ECW"/>
<dbReference type="BMRB" id="P15533"/>
<dbReference type="SMR" id="P15533"/>
<dbReference type="BioGRID" id="203018">
    <property type="interactions" value="8"/>
</dbReference>
<dbReference type="FunCoup" id="P15533">
    <property type="interactions" value="51"/>
</dbReference>
<dbReference type="IntAct" id="P15533">
    <property type="interactions" value="2"/>
</dbReference>
<dbReference type="STRING" id="10090.ENSMUSP00000076189"/>
<dbReference type="iPTMnet" id="P15533"/>
<dbReference type="PhosphoSitePlus" id="P15533"/>
<dbReference type="jPOST" id="P15533"/>
<dbReference type="PaxDb" id="10090-ENSMUSP00000076189"/>
<dbReference type="ProteomicsDB" id="297517">
    <molecule id="P15533-1"/>
</dbReference>
<dbReference type="ProteomicsDB" id="297518">
    <molecule id="P15533-2"/>
</dbReference>
<dbReference type="DNASU" id="20128"/>
<dbReference type="Ensembl" id="ENSMUST00000076922.6">
    <molecule id="P15533-1"/>
    <property type="protein sequence ID" value="ENSMUSP00000076189.6"/>
    <property type="gene ID" value="ENSMUSG00000030921.18"/>
</dbReference>
<dbReference type="GeneID" id="20128"/>
<dbReference type="KEGG" id="mmu:20128"/>
<dbReference type="UCSC" id="uc009iwh.1">
    <molecule id="P15533-1"/>
    <property type="organism name" value="mouse"/>
</dbReference>
<dbReference type="UCSC" id="uc009iwi.1">
    <molecule id="P15533-2"/>
    <property type="organism name" value="mouse"/>
</dbReference>
<dbReference type="AGR" id="MGI:98178"/>
<dbReference type="CTD" id="20128"/>
<dbReference type="MGI" id="MGI:98178">
    <property type="gene designation" value="Trim30a"/>
</dbReference>
<dbReference type="VEuPathDB" id="HostDB:ENSMUSG00000030921"/>
<dbReference type="eggNOG" id="KOG2177">
    <property type="taxonomic scope" value="Eukaryota"/>
</dbReference>
<dbReference type="GeneTree" id="ENSGT00940000154647"/>
<dbReference type="HOGENOM" id="CLU_013137_0_3_1"/>
<dbReference type="InParanoid" id="P15533"/>
<dbReference type="OMA" id="KVNICAQ"/>
<dbReference type="OrthoDB" id="654191at2759"/>
<dbReference type="PhylomeDB" id="P15533"/>
<dbReference type="TreeFam" id="TF342569"/>
<dbReference type="BioGRID-ORCS" id="20128">
    <property type="hits" value="3 hits in 76 CRISPR screens"/>
</dbReference>
<dbReference type="ChiTaRS" id="Trim30a">
    <property type="organism name" value="mouse"/>
</dbReference>
<dbReference type="EvolutionaryTrace" id="P15533"/>
<dbReference type="PRO" id="PR:P15533"/>
<dbReference type="Proteomes" id="UP000000589">
    <property type="component" value="Chromosome 7"/>
</dbReference>
<dbReference type="RNAct" id="P15533">
    <property type="molecule type" value="protein"/>
</dbReference>
<dbReference type="Bgee" id="ENSMUSG00000030921">
    <property type="expression patterns" value="Expressed in peripheral lymph node and 175 other cell types or tissues"/>
</dbReference>
<dbReference type="GO" id="GO:0005737">
    <property type="term" value="C:cytoplasm"/>
    <property type="evidence" value="ECO:0000314"/>
    <property type="project" value="UniProtKB"/>
</dbReference>
<dbReference type="GO" id="GO:0005634">
    <property type="term" value="C:nucleus"/>
    <property type="evidence" value="ECO:0007669"/>
    <property type="project" value="UniProtKB-SubCell"/>
</dbReference>
<dbReference type="GO" id="GO:0003677">
    <property type="term" value="F:DNA binding"/>
    <property type="evidence" value="ECO:0007669"/>
    <property type="project" value="UniProtKB-KW"/>
</dbReference>
<dbReference type="GO" id="GO:0008270">
    <property type="term" value="F:zinc ion binding"/>
    <property type="evidence" value="ECO:0007669"/>
    <property type="project" value="UniProtKB-KW"/>
</dbReference>
<dbReference type="GO" id="GO:0032715">
    <property type="term" value="P:negative regulation of interleukin-6 production"/>
    <property type="evidence" value="ECO:0000315"/>
    <property type="project" value="UniProtKB"/>
</dbReference>
<dbReference type="GO" id="GO:1900226">
    <property type="term" value="P:negative regulation of NLRP3 inflammasome complex assembly"/>
    <property type="evidence" value="ECO:0000315"/>
    <property type="project" value="UniProtKB"/>
</dbReference>
<dbReference type="GO" id="GO:2000378">
    <property type="term" value="P:negative regulation of reactive oxygen species metabolic process"/>
    <property type="evidence" value="ECO:0000315"/>
    <property type="project" value="UniProtKB"/>
</dbReference>
<dbReference type="GO" id="GO:0034122">
    <property type="term" value="P:negative regulation of toll-like receptor signaling pathway"/>
    <property type="evidence" value="ECO:0000315"/>
    <property type="project" value="UniProtKB"/>
</dbReference>
<dbReference type="GO" id="GO:0032720">
    <property type="term" value="P:negative regulation of tumor necrosis factor production"/>
    <property type="evidence" value="ECO:0000315"/>
    <property type="project" value="UniProtKB"/>
</dbReference>
<dbReference type="GO" id="GO:0045732">
    <property type="term" value="P:positive regulation of protein catabolic process"/>
    <property type="evidence" value="ECO:0000315"/>
    <property type="project" value="UniProtKB"/>
</dbReference>
<dbReference type="GO" id="GO:0046598">
    <property type="term" value="P:positive regulation of viral entry into host cell"/>
    <property type="evidence" value="ECO:0000314"/>
    <property type="project" value="UniProtKB"/>
</dbReference>
<dbReference type="GO" id="GO:0051865">
    <property type="term" value="P:protein autoubiquitination"/>
    <property type="evidence" value="ECO:0000315"/>
    <property type="project" value="UniProtKB"/>
</dbReference>
<dbReference type="GO" id="GO:0009617">
    <property type="term" value="P:response to bacterium"/>
    <property type="evidence" value="ECO:0000270"/>
    <property type="project" value="MGI"/>
</dbReference>
<dbReference type="CDD" id="cd19761">
    <property type="entry name" value="Bbox2_TRIM5-like"/>
    <property type="match status" value="1"/>
</dbReference>
<dbReference type="CDD" id="cd16591">
    <property type="entry name" value="RING-HC_TRIM5-like_C-IV"/>
    <property type="match status" value="1"/>
</dbReference>
<dbReference type="FunFam" id="2.60.120.920:FF:000087">
    <property type="entry name" value="Tripartite motif-containing 5"/>
    <property type="match status" value="1"/>
</dbReference>
<dbReference type="FunFam" id="3.30.160.60:FF:000386">
    <property type="entry name" value="Tripartite motif-containing 5 (Predicted)"/>
    <property type="match status" value="1"/>
</dbReference>
<dbReference type="FunFam" id="3.30.40.10:FF:000144">
    <property type="entry name" value="Tripartite motif-containing 5 (Predicted)"/>
    <property type="match status" value="1"/>
</dbReference>
<dbReference type="Gene3D" id="2.60.120.920">
    <property type="match status" value="1"/>
</dbReference>
<dbReference type="Gene3D" id="3.30.160.60">
    <property type="entry name" value="Classic Zinc Finger"/>
    <property type="match status" value="1"/>
</dbReference>
<dbReference type="Gene3D" id="3.30.40.10">
    <property type="entry name" value="Zinc/RING finger domain, C3HC4 (zinc finger)"/>
    <property type="match status" value="1"/>
</dbReference>
<dbReference type="InterPro" id="IPR001870">
    <property type="entry name" value="B30.2/SPRY"/>
</dbReference>
<dbReference type="InterPro" id="IPR043136">
    <property type="entry name" value="B30.2/SPRY_sf"/>
</dbReference>
<dbReference type="InterPro" id="IPR003879">
    <property type="entry name" value="Butyrophylin_SPRY"/>
</dbReference>
<dbReference type="InterPro" id="IPR013320">
    <property type="entry name" value="ConA-like_dom_sf"/>
</dbReference>
<dbReference type="InterPro" id="IPR003877">
    <property type="entry name" value="SPRY_dom"/>
</dbReference>
<dbReference type="InterPro" id="IPR050143">
    <property type="entry name" value="TRIM/RBCC"/>
</dbReference>
<dbReference type="InterPro" id="IPR027370">
    <property type="entry name" value="Znf-RING_euk"/>
</dbReference>
<dbReference type="InterPro" id="IPR000315">
    <property type="entry name" value="Znf_B-box"/>
</dbReference>
<dbReference type="InterPro" id="IPR001841">
    <property type="entry name" value="Znf_RING"/>
</dbReference>
<dbReference type="InterPro" id="IPR013083">
    <property type="entry name" value="Znf_RING/FYVE/PHD"/>
</dbReference>
<dbReference type="InterPro" id="IPR017907">
    <property type="entry name" value="Znf_RING_CS"/>
</dbReference>
<dbReference type="PANTHER" id="PTHR24103">
    <property type="entry name" value="E3 UBIQUITIN-PROTEIN LIGASE TRIM"/>
    <property type="match status" value="1"/>
</dbReference>
<dbReference type="Pfam" id="PF00622">
    <property type="entry name" value="SPRY"/>
    <property type="match status" value="1"/>
</dbReference>
<dbReference type="Pfam" id="PF00643">
    <property type="entry name" value="zf-B_box"/>
    <property type="match status" value="1"/>
</dbReference>
<dbReference type="Pfam" id="PF13445">
    <property type="entry name" value="zf-RING_UBOX"/>
    <property type="match status" value="1"/>
</dbReference>
<dbReference type="PRINTS" id="PR01407">
    <property type="entry name" value="BUTYPHLNCDUF"/>
</dbReference>
<dbReference type="SMART" id="SM00336">
    <property type="entry name" value="BBOX"/>
    <property type="match status" value="1"/>
</dbReference>
<dbReference type="SMART" id="SM00184">
    <property type="entry name" value="RING"/>
    <property type="match status" value="1"/>
</dbReference>
<dbReference type="SMART" id="SM00449">
    <property type="entry name" value="SPRY"/>
    <property type="match status" value="1"/>
</dbReference>
<dbReference type="SUPFAM" id="SSF58113">
    <property type="entry name" value="Apolipoprotein A-I"/>
    <property type="match status" value="1"/>
</dbReference>
<dbReference type="SUPFAM" id="SSF57845">
    <property type="entry name" value="B-box zinc-binding domain"/>
    <property type="match status" value="1"/>
</dbReference>
<dbReference type="SUPFAM" id="SSF49899">
    <property type="entry name" value="Concanavalin A-like lectins/glucanases"/>
    <property type="match status" value="1"/>
</dbReference>
<dbReference type="SUPFAM" id="SSF57850">
    <property type="entry name" value="RING/U-box"/>
    <property type="match status" value="1"/>
</dbReference>
<dbReference type="PROSITE" id="PS50188">
    <property type="entry name" value="B302_SPRY"/>
    <property type="match status" value="1"/>
</dbReference>
<dbReference type="PROSITE" id="PS50119">
    <property type="entry name" value="ZF_BBOX"/>
    <property type="match status" value="1"/>
</dbReference>
<dbReference type="PROSITE" id="PS00518">
    <property type="entry name" value="ZF_RING_1"/>
    <property type="match status" value="1"/>
</dbReference>
<dbReference type="PROSITE" id="PS50089">
    <property type="entry name" value="ZF_RING_2"/>
    <property type="match status" value="1"/>
</dbReference>
<reference key="1">
    <citation type="journal article" date="1988" name="Proc. Natl. Acad. Sci. U.S.A.">
        <title>rpt-1, an intracellular protein from helper/inducer T cells that regulates gene expression of interleukin 2 receptor and human immunodeficiency virus type 1.</title>
        <authorList>
            <person name="Patarca R."/>
            <person name="Schwartz J."/>
            <person name="Singh R.P."/>
            <person name="Kong Q.-T."/>
            <person name="Murphy E."/>
            <person name="Anderson Y."/>
            <person name="Sheng F.-Y.W."/>
            <person name="Singh P."/>
            <person name="Johnson K.A."/>
            <person name="Guarnagia S.M."/>
            <person name="Durfee T."/>
            <person name="Blattner F."/>
            <person name="Cantor H."/>
        </authorList>
    </citation>
    <scope>NUCLEOTIDE SEQUENCE [MRNA] (ISOFORM ALPHA)</scope>
</reference>
<reference key="2">
    <citation type="journal article" date="1988" name="Proc. Natl. Acad. Sci. U.S.A.">
        <authorList>
            <person name="Patarca R."/>
            <person name="Schwartz J."/>
            <person name="Singh R.P."/>
            <person name="Kong Q.-T."/>
            <person name="Murphy E."/>
            <person name="Anderson Y."/>
            <person name="Sheng F.-Y.W."/>
            <person name="Singh P."/>
            <person name="Johnson K.A."/>
            <person name="Guarnagia S.M."/>
            <person name="Durfee T."/>
            <person name="Blattner F."/>
            <person name="Cantor H."/>
        </authorList>
    </citation>
    <scope>ERRATUM OF PUBMED:2965815</scope>
</reference>
<reference key="3">
    <citation type="journal article" date="2001" name="EMBO J.">
        <title>The tripartite motif family identifies cell compartments.</title>
        <authorList>
            <person name="Reymond A."/>
            <person name="Meroni G."/>
            <person name="Fantozzi A."/>
            <person name="Merla G."/>
            <person name="Cairo S."/>
            <person name="Luzi L."/>
            <person name="Riganelli D."/>
            <person name="Zanaria E."/>
            <person name="Messali S."/>
            <person name="Cainarca S."/>
            <person name="Guffanti A."/>
            <person name="Minucci S."/>
            <person name="Pelicci P.G."/>
            <person name="Ballabio A."/>
        </authorList>
    </citation>
    <scope>NUCLEOTIDE SEQUENCE [GENOMIC DNA / MRNA] (ISOFORMS ALPHA AND BETA)</scope>
    <scope>HOMOMULTIMERIZATION</scope>
    <scope>SUBCELLULAR LOCATION</scope>
</reference>
<reference key="4">
    <citation type="journal article" date="2005" name="Science">
        <title>The transcriptional landscape of the mammalian genome.</title>
        <authorList>
            <person name="Carninci P."/>
            <person name="Kasukawa T."/>
            <person name="Katayama S."/>
            <person name="Gough J."/>
            <person name="Frith M.C."/>
            <person name="Maeda N."/>
            <person name="Oyama R."/>
            <person name="Ravasi T."/>
            <person name="Lenhard B."/>
            <person name="Wells C."/>
            <person name="Kodzius R."/>
            <person name="Shimokawa K."/>
            <person name="Bajic V.B."/>
            <person name="Brenner S.E."/>
            <person name="Batalov S."/>
            <person name="Forrest A.R."/>
            <person name="Zavolan M."/>
            <person name="Davis M.J."/>
            <person name="Wilming L.G."/>
            <person name="Aidinis V."/>
            <person name="Allen J.E."/>
            <person name="Ambesi-Impiombato A."/>
            <person name="Apweiler R."/>
            <person name="Aturaliya R.N."/>
            <person name="Bailey T.L."/>
            <person name="Bansal M."/>
            <person name="Baxter L."/>
            <person name="Beisel K.W."/>
            <person name="Bersano T."/>
            <person name="Bono H."/>
            <person name="Chalk A.M."/>
            <person name="Chiu K.P."/>
            <person name="Choudhary V."/>
            <person name="Christoffels A."/>
            <person name="Clutterbuck D.R."/>
            <person name="Crowe M.L."/>
            <person name="Dalla E."/>
            <person name="Dalrymple B.P."/>
            <person name="de Bono B."/>
            <person name="Della Gatta G."/>
            <person name="di Bernardo D."/>
            <person name="Down T."/>
            <person name="Engstrom P."/>
            <person name="Fagiolini M."/>
            <person name="Faulkner G."/>
            <person name="Fletcher C.F."/>
            <person name="Fukushima T."/>
            <person name="Furuno M."/>
            <person name="Futaki S."/>
            <person name="Gariboldi M."/>
            <person name="Georgii-Hemming P."/>
            <person name="Gingeras T.R."/>
            <person name="Gojobori T."/>
            <person name="Green R.E."/>
            <person name="Gustincich S."/>
            <person name="Harbers M."/>
            <person name="Hayashi Y."/>
            <person name="Hensch T.K."/>
            <person name="Hirokawa N."/>
            <person name="Hill D."/>
            <person name="Huminiecki L."/>
            <person name="Iacono M."/>
            <person name="Ikeo K."/>
            <person name="Iwama A."/>
            <person name="Ishikawa T."/>
            <person name="Jakt M."/>
            <person name="Kanapin A."/>
            <person name="Katoh M."/>
            <person name="Kawasawa Y."/>
            <person name="Kelso J."/>
            <person name="Kitamura H."/>
            <person name="Kitano H."/>
            <person name="Kollias G."/>
            <person name="Krishnan S.P."/>
            <person name="Kruger A."/>
            <person name="Kummerfeld S.K."/>
            <person name="Kurochkin I.V."/>
            <person name="Lareau L.F."/>
            <person name="Lazarevic D."/>
            <person name="Lipovich L."/>
            <person name="Liu J."/>
            <person name="Liuni S."/>
            <person name="McWilliam S."/>
            <person name="Madan Babu M."/>
            <person name="Madera M."/>
            <person name="Marchionni L."/>
            <person name="Matsuda H."/>
            <person name="Matsuzawa S."/>
            <person name="Miki H."/>
            <person name="Mignone F."/>
            <person name="Miyake S."/>
            <person name="Morris K."/>
            <person name="Mottagui-Tabar S."/>
            <person name="Mulder N."/>
            <person name="Nakano N."/>
            <person name="Nakauchi H."/>
            <person name="Ng P."/>
            <person name="Nilsson R."/>
            <person name="Nishiguchi S."/>
            <person name="Nishikawa S."/>
            <person name="Nori F."/>
            <person name="Ohara O."/>
            <person name="Okazaki Y."/>
            <person name="Orlando V."/>
            <person name="Pang K.C."/>
            <person name="Pavan W.J."/>
            <person name="Pavesi G."/>
            <person name="Pesole G."/>
            <person name="Petrovsky N."/>
            <person name="Piazza S."/>
            <person name="Reed J."/>
            <person name="Reid J.F."/>
            <person name="Ring B.Z."/>
            <person name="Ringwald M."/>
            <person name="Rost B."/>
            <person name="Ruan Y."/>
            <person name="Salzberg S.L."/>
            <person name="Sandelin A."/>
            <person name="Schneider C."/>
            <person name="Schoenbach C."/>
            <person name="Sekiguchi K."/>
            <person name="Semple C.A."/>
            <person name="Seno S."/>
            <person name="Sessa L."/>
            <person name="Sheng Y."/>
            <person name="Shibata Y."/>
            <person name="Shimada H."/>
            <person name="Shimada K."/>
            <person name="Silva D."/>
            <person name="Sinclair B."/>
            <person name="Sperling S."/>
            <person name="Stupka E."/>
            <person name="Sugiura K."/>
            <person name="Sultana R."/>
            <person name="Takenaka Y."/>
            <person name="Taki K."/>
            <person name="Tammoja K."/>
            <person name="Tan S.L."/>
            <person name="Tang S."/>
            <person name="Taylor M.S."/>
            <person name="Tegner J."/>
            <person name="Teichmann S.A."/>
            <person name="Ueda H.R."/>
            <person name="van Nimwegen E."/>
            <person name="Verardo R."/>
            <person name="Wei C.L."/>
            <person name="Yagi K."/>
            <person name="Yamanishi H."/>
            <person name="Zabarovsky E."/>
            <person name="Zhu S."/>
            <person name="Zimmer A."/>
            <person name="Hide W."/>
            <person name="Bult C."/>
            <person name="Grimmond S.M."/>
            <person name="Teasdale R.D."/>
            <person name="Liu E.T."/>
            <person name="Brusic V."/>
            <person name="Quackenbush J."/>
            <person name="Wahlestedt C."/>
            <person name="Mattick J.S."/>
            <person name="Hume D.A."/>
            <person name="Kai C."/>
            <person name="Sasaki D."/>
            <person name="Tomaru Y."/>
            <person name="Fukuda S."/>
            <person name="Kanamori-Katayama M."/>
            <person name="Suzuki M."/>
            <person name="Aoki J."/>
            <person name="Arakawa T."/>
            <person name="Iida J."/>
            <person name="Imamura K."/>
            <person name="Itoh M."/>
            <person name="Kato T."/>
            <person name="Kawaji H."/>
            <person name="Kawagashira N."/>
            <person name="Kawashima T."/>
            <person name="Kojima M."/>
            <person name="Kondo S."/>
            <person name="Konno H."/>
            <person name="Nakano K."/>
            <person name="Ninomiya N."/>
            <person name="Nishio T."/>
            <person name="Okada M."/>
            <person name="Plessy C."/>
            <person name="Shibata K."/>
            <person name="Shiraki T."/>
            <person name="Suzuki S."/>
            <person name="Tagami M."/>
            <person name="Waki K."/>
            <person name="Watahiki A."/>
            <person name="Okamura-Oho Y."/>
            <person name="Suzuki H."/>
            <person name="Kawai J."/>
            <person name="Hayashizaki Y."/>
        </authorList>
    </citation>
    <scope>NUCLEOTIDE SEQUENCE [LARGE SCALE MRNA] (ISOFORM ALPHA)</scope>
    <source>
        <strain>C57BL/6J</strain>
        <tissue>Bone</tissue>
        <tissue>Thymus</tissue>
    </source>
</reference>
<reference key="5">
    <citation type="journal article" date="2009" name="PLoS Biol.">
        <title>Lineage-specific biology revealed by a finished genome assembly of the mouse.</title>
        <authorList>
            <person name="Church D.M."/>
            <person name="Goodstadt L."/>
            <person name="Hillier L.W."/>
            <person name="Zody M.C."/>
            <person name="Goldstein S."/>
            <person name="She X."/>
            <person name="Bult C.J."/>
            <person name="Agarwala R."/>
            <person name="Cherry J.L."/>
            <person name="DiCuccio M."/>
            <person name="Hlavina W."/>
            <person name="Kapustin Y."/>
            <person name="Meric P."/>
            <person name="Maglott D."/>
            <person name="Birtle Z."/>
            <person name="Marques A.C."/>
            <person name="Graves T."/>
            <person name="Zhou S."/>
            <person name="Teague B."/>
            <person name="Potamousis K."/>
            <person name="Churas C."/>
            <person name="Place M."/>
            <person name="Herschleb J."/>
            <person name="Runnheim R."/>
            <person name="Forrest D."/>
            <person name="Amos-Landgraf J."/>
            <person name="Schwartz D.C."/>
            <person name="Cheng Z."/>
            <person name="Lindblad-Toh K."/>
            <person name="Eichler E.E."/>
            <person name="Ponting C.P."/>
        </authorList>
    </citation>
    <scope>NUCLEOTIDE SEQUENCE [LARGE SCALE GENOMIC DNA]</scope>
    <source>
        <strain>C57BL/6J</strain>
    </source>
</reference>
<reference key="6">
    <citation type="submission" date="2005-07" db="EMBL/GenBank/DDBJ databases">
        <authorList>
            <person name="Mural R.J."/>
            <person name="Adams M.D."/>
            <person name="Myers E.W."/>
            <person name="Smith H.O."/>
            <person name="Venter J.C."/>
        </authorList>
    </citation>
    <scope>NUCLEOTIDE SEQUENCE [LARGE SCALE GENOMIC DNA]</scope>
</reference>
<reference key="7">
    <citation type="journal article" date="2004" name="Genome Res.">
        <title>The status, quality, and expansion of the NIH full-length cDNA project: the Mammalian Gene Collection (MGC).</title>
        <authorList>
            <consortium name="The MGC Project Team"/>
        </authorList>
    </citation>
    <scope>NUCLEOTIDE SEQUENCE [LARGE SCALE MRNA] (ISOFORM ALPHA)</scope>
    <source>
        <strain>Czech II</strain>
        <tissue>Mammary tumor</tissue>
    </source>
</reference>
<reference key="8">
    <citation type="journal article" date="2008" name="Nat. Immunol.">
        <title>TRIM30 alpha negatively regulates TLR-mediated NF-kappa B activation by targeting TAB2 and TAB3 for degradation.</title>
        <authorList>
            <person name="Shi M."/>
            <person name="Deng W."/>
            <person name="Bi E."/>
            <person name="Mao K."/>
            <person name="Ji Y."/>
            <person name="Lin G."/>
            <person name="Wu X."/>
            <person name="Tao Z."/>
            <person name="Li Z."/>
            <person name="Cai X."/>
            <person name="Sun S."/>
            <person name="Xiang C."/>
            <person name="Sun B."/>
        </authorList>
    </citation>
    <scope>FUNCTION</scope>
    <scope>INTERACTION WITH NR2C2; TAB2 AND TAB3</scope>
    <scope>SUBCELLULAR LOCATION</scope>
    <scope>TISSUE SPECIFICITY</scope>
    <scope>INDUCTION</scope>
    <scope>MUTAGENESIS OF CYS-35</scope>
</reference>
<reference key="9">
    <citation type="journal article" date="2009" name="Virology">
        <title>An expanded clade of rodent Trim5 genes.</title>
        <authorList>
            <person name="Tareen S.U."/>
            <person name="Sawyer S.L."/>
            <person name="Malik H.S."/>
            <person name="Emerman M."/>
        </authorList>
    </citation>
    <scope>IDENTIFICATION</scope>
    <scope>FUNCTION</scope>
</reference>
<reference key="10">
    <citation type="journal article" date="2010" name="J. Immunol.">
        <title>Tripartite-motif protein 30 negatively regulates NLRP3 inflammasome activation by modulating reactive oxygen species production.</title>
        <authorList>
            <person name="Hu Y."/>
            <person name="Mao K."/>
            <person name="Zeng Y."/>
            <person name="Chen S."/>
            <person name="Tao Z."/>
            <person name="Yang C."/>
            <person name="Sun S."/>
            <person name="Wu X."/>
            <person name="Meng G."/>
            <person name="Sun B."/>
        </authorList>
    </citation>
    <scope>FUNCTION</scope>
    <scope>INTERACTION WITH NR2C2</scope>
    <scope>MUTAGENESIS OF CYS-35</scope>
</reference>
<reference key="11">
    <citation type="submission" date="2008-02" db="PDB data bank">
        <title>Solution structure of the zinc finger, C3HC4 type (RING finger) domain tripartite motif protein 30.</title>
        <authorList>
            <consortium name="RIKEN structural genomics initiative (RSGI)"/>
        </authorList>
    </citation>
    <scope>STRUCTURE BY NMR OF 1-78</scope>
</reference>
<protein>
    <recommendedName>
        <fullName>Tripartite motif-containing protein 30A</fullName>
    </recommendedName>
    <alternativeName>
        <fullName>Down regulatory protein of interleukin-2 receptor</fullName>
    </alternativeName>
    <alternativeName>
        <fullName>Tripartite motif-containing protein 30</fullName>
    </alternativeName>
</protein>
<evidence type="ECO:0000255" key="1"/>
<evidence type="ECO:0000255" key="2">
    <source>
        <dbReference type="PROSITE-ProRule" id="PRU00024"/>
    </source>
</evidence>
<evidence type="ECO:0000255" key="3">
    <source>
        <dbReference type="PROSITE-ProRule" id="PRU00175"/>
    </source>
</evidence>
<evidence type="ECO:0000255" key="4">
    <source>
        <dbReference type="PROSITE-ProRule" id="PRU00548"/>
    </source>
</evidence>
<evidence type="ECO:0000269" key="5">
    <source>
    </source>
</evidence>
<evidence type="ECO:0000269" key="6">
    <source>
    </source>
</evidence>
<evidence type="ECO:0000269" key="7">
    <source>
    </source>
</evidence>
<evidence type="ECO:0000303" key="8">
    <source>
    </source>
</evidence>
<evidence type="ECO:0000305" key="9"/>
<evidence type="ECO:0007829" key="10">
    <source>
        <dbReference type="PDB" id="2ECW"/>
    </source>
</evidence>
<comment type="function">
    <text evidence="5 6 7">Trans-acting factor that regulates gene expression of interleukin 2 receptor alpha chain. May affect IL2R-alpha expression through cis-acting negative regulatory elements or through competition with proteins that bind to enhancer or activator sequences. Negatively regulates Toll-like receptor (TLR)-mediated activation of NFKB by promoting degradation of TAB2 and TAB3 and preventing TRAF6 autoubiquitination. Negatively regulates production of reactive oxygen species (ROS) which inhibits activation of the NLRP3 inflammasome complex. This, in turn, regulates activation of CASP1 and subsequent cleavage of IL1B and IL18. No activity detected against a range of retroviruses including a number of lentiviruses, gammaretroviruses and betaretroviruses.</text>
</comment>
<comment type="subunit">
    <text evidence="5 7">Homomultimer. Interacts with NR2C2/TAK1, TAB2 and TAB3. Does not interact with NLRP3, NLRC4 or TAB1.</text>
</comment>
<comment type="subcellular location">
    <subcellularLocation>
        <location>Cytoplasm</location>
    </subcellularLocation>
    <subcellularLocation>
        <location>Nucleus</location>
    </subcellularLocation>
</comment>
<comment type="alternative products">
    <event type="alternative splicing"/>
    <isoform>
        <id>P15533-1</id>
        <name>Alpha</name>
        <sequence type="displayed"/>
    </isoform>
    <isoform>
        <id>P15533-2</id>
        <name>Beta</name>
        <sequence type="described" ref="VSP_005762 VSP_005763"/>
    </isoform>
</comment>
<comment type="tissue specificity">
    <text evidence="5">Highly expressed in spleen and lymph nodes (at protein level).</text>
</comment>
<comment type="induction">
    <text evidence="5">By the TLR ligands lipopolysaccharide, CpG dinucleotide and polyinosinic-polycytidylic acid.</text>
</comment>
<comment type="sequence caution" evidence="9">
    <conflict type="frameshift">
        <sequence resource="EMBL-CDS" id="AAA40073"/>
    </conflict>
</comment>
<comment type="sequence caution" evidence="9">
    <conflict type="erroneous initiation">
        <sequence resource="EMBL-CDS" id="AAG53470"/>
    </conflict>
    <text>Extended N-terminus.</text>
</comment>
<keyword id="KW-0002">3D-structure</keyword>
<keyword id="KW-0025">Alternative splicing</keyword>
<keyword id="KW-0175">Coiled coil</keyword>
<keyword id="KW-0963">Cytoplasm</keyword>
<keyword id="KW-0238">DNA-binding</keyword>
<keyword id="KW-0479">Metal-binding</keyword>
<keyword id="KW-0539">Nucleus</keyword>
<keyword id="KW-1185">Reference proteome</keyword>
<keyword id="KW-0804">Transcription</keyword>
<keyword id="KW-0805">Transcription regulation</keyword>
<keyword id="KW-0862">Zinc</keyword>
<keyword id="KW-0863">Zinc-finger</keyword>
<feature type="chain" id="PRO_0000056244" description="Tripartite motif-containing protein 30A">
    <location>
        <begin position="1"/>
        <end position="496"/>
    </location>
</feature>
<feature type="domain" description="B30.2/SPRY" evidence="4">
    <location>
        <begin position="281"/>
        <end position="496"/>
    </location>
</feature>
<feature type="zinc finger region" description="RING-type" evidence="3">
    <location>
        <begin position="15"/>
        <end position="59"/>
    </location>
</feature>
<feature type="zinc finger region" description="B box-type" evidence="2">
    <location>
        <begin position="91"/>
        <end position="132"/>
    </location>
</feature>
<feature type="region of interest" description="Highly hydrophilic">
    <location>
        <begin position="205"/>
        <end position="210"/>
    </location>
</feature>
<feature type="coiled-coil region" evidence="1">
    <location>
        <begin position="173"/>
        <end position="239"/>
    </location>
</feature>
<feature type="short sequence motif" description="Nuclear localization signal" evidence="1">
    <location>
        <begin position="268"/>
        <end position="276"/>
    </location>
</feature>
<feature type="binding site" evidence="2">
    <location>
        <position position="96"/>
    </location>
    <ligand>
        <name>Zn(2+)</name>
        <dbReference type="ChEBI" id="CHEBI:29105"/>
    </ligand>
</feature>
<feature type="binding site" evidence="2">
    <location>
        <position position="99"/>
    </location>
    <ligand>
        <name>Zn(2+)</name>
        <dbReference type="ChEBI" id="CHEBI:29105"/>
    </ligand>
</feature>
<feature type="binding site" evidence="2">
    <location>
        <position position="118"/>
    </location>
    <ligand>
        <name>Zn(2+)</name>
        <dbReference type="ChEBI" id="CHEBI:29105"/>
    </ligand>
</feature>
<feature type="binding site" evidence="2">
    <location>
        <position position="124"/>
    </location>
    <ligand>
        <name>Zn(2+)</name>
        <dbReference type="ChEBI" id="CHEBI:29105"/>
    </ligand>
</feature>
<feature type="splice variant" id="VSP_005762" description="In isoform Beta." evidence="8">
    <original>GALWKLM</original>
    <variation>SLHHTEL</variation>
    <location>
        <begin position="145"/>
        <end position="151"/>
    </location>
</feature>
<feature type="splice variant" id="VSP_005763" description="In isoform Beta." evidence="8">
    <location>
        <begin position="152"/>
        <end position="496"/>
    </location>
</feature>
<feature type="mutagenesis site" description="Reduced interaction with NR2C2 and enhanced interaction with TAB2 and TAB3. Does not decrease TAB2 or TAB3 expression. No effect on inhibition of ROS or negative regulation of NLRP3 inflammasome activation." evidence="5 7">
    <original>C</original>
    <variation>S</variation>
    <location>
        <position position="35"/>
    </location>
</feature>
<feature type="sequence conflict" description="In Ref. 7; AAH05447." evidence="9" ref="7">
    <original>R</original>
    <variation>K</variation>
    <location>
        <position position="68"/>
    </location>
</feature>
<feature type="sequence conflict" description="In Ref. 7; AAH05447." evidence="9" ref="7">
    <original>W</original>
    <variation>R</variation>
    <location>
        <position position="148"/>
    </location>
</feature>
<feature type="sequence conflict" description="In Ref. 7; AAH05447." evidence="9" ref="7">
    <original>E</original>
    <variation>Q</variation>
    <location>
        <position position="241"/>
    </location>
</feature>
<feature type="sequence conflict" description="In Ref. 7; AAH05447." evidence="9" ref="7">
    <original>T</original>
    <variation>S</variation>
    <location>
        <position position="268"/>
    </location>
</feature>
<feature type="sequence conflict" description="In Ref. 7; AAH05447." evidence="9" ref="7">
    <original>K</original>
    <variation>N</variation>
    <location>
        <position position="416"/>
    </location>
</feature>
<feature type="sequence conflict" description="In Ref. 7; AAH05447." evidence="9" ref="7">
    <original>R</original>
    <variation>C</variation>
    <location>
        <position position="437"/>
    </location>
</feature>
<feature type="turn" evidence="10">
    <location>
        <begin position="11"/>
        <end position="13"/>
    </location>
</feature>
<feature type="turn" evidence="10">
    <location>
        <begin position="16"/>
        <end position="18"/>
    </location>
</feature>
<feature type="helix" evidence="10">
    <location>
        <begin position="36"/>
        <end position="45"/>
    </location>
</feature>
<feature type="turn" evidence="10">
    <location>
        <begin position="56"/>
        <end position="58"/>
    </location>
</feature>
<name>TR30A_MOUSE</name>
<sequence length="496" mass="57330">MASSVLEMIKEEVTCPICLELLKEPVSADCNHSFCRACITLNYESNRNTDGKGNCPVCRVPYPFGNLRPNLHVANIVERLKGFKSIPEEEQKVNICAQHGEKLRLFCRKDMMVICWLCERSQEHRGHQTALIEEVDQEYKEKLQGALWKLMKKAKICDEWQDDLQLQRVDWENQIQINVENVQRQFKGLRDLLDSKENEELQKLKKEKKEVMEKLEESENELEDQTELVRDLISDVEHHLELSTLEMLQGANCVLRRSQSLSLQQPQTVPQKRKRTFQAPDLKGMLQVYQGLMDIQQYWVHMTLHARNNAVIAINKEKRQIQYRSYNTVPVSEIYHLGVLGYPALSSGKHYWEVDISRSDAWLLGLNDGKCAQPQLHSKEEMGIKKNLHSQIKQNVLFQPKCGYWVIGMKNPSVYKAFDECSITHNSSILVISLPDRPSRVGVFLDRKAGTLSFYDVSNCGALIYRFYDPAFPVEVYPYFNPMKCSEPMTICGPPS</sequence>
<gene>
    <name type="primary">Trim30a</name>
    <name type="synonym">Rpt-1</name>
    <name type="synonym">Rpt1</name>
    <name type="synonym">Trim30</name>
</gene>